<name>IF172_HUMAN</name>
<organism>
    <name type="scientific">Homo sapiens</name>
    <name type="common">Human</name>
    <dbReference type="NCBI Taxonomy" id="9606"/>
    <lineage>
        <taxon>Eukaryota</taxon>
        <taxon>Metazoa</taxon>
        <taxon>Chordata</taxon>
        <taxon>Craniata</taxon>
        <taxon>Vertebrata</taxon>
        <taxon>Euteleostomi</taxon>
        <taxon>Mammalia</taxon>
        <taxon>Eutheria</taxon>
        <taxon>Euarchontoglires</taxon>
        <taxon>Primates</taxon>
        <taxon>Haplorrhini</taxon>
        <taxon>Catarrhini</taxon>
        <taxon>Hominidae</taxon>
        <taxon>Homo</taxon>
    </lineage>
</organism>
<proteinExistence type="evidence at protein level"/>
<reference key="1">
    <citation type="journal article" date="2005" name="Nature">
        <title>Generation and annotation of the DNA sequences of human chromosomes 2 and 4.</title>
        <authorList>
            <person name="Hillier L.W."/>
            <person name="Graves T.A."/>
            <person name="Fulton R.S."/>
            <person name="Fulton L.A."/>
            <person name="Pepin K.H."/>
            <person name="Minx P."/>
            <person name="Wagner-McPherson C."/>
            <person name="Layman D."/>
            <person name="Wylie K."/>
            <person name="Sekhon M."/>
            <person name="Becker M.C."/>
            <person name="Fewell G.A."/>
            <person name="Delehaunty K.D."/>
            <person name="Miner T.L."/>
            <person name="Nash W.E."/>
            <person name="Kremitzki C."/>
            <person name="Oddy L."/>
            <person name="Du H."/>
            <person name="Sun H."/>
            <person name="Bradshaw-Cordum H."/>
            <person name="Ali J."/>
            <person name="Carter J."/>
            <person name="Cordes M."/>
            <person name="Harris A."/>
            <person name="Isak A."/>
            <person name="van Brunt A."/>
            <person name="Nguyen C."/>
            <person name="Du F."/>
            <person name="Courtney L."/>
            <person name="Kalicki J."/>
            <person name="Ozersky P."/>
            <person name="Abbott S."/>
            <person name="Armstrong J."/>
            <person name="Belter E.A."/>
            <person name="Caruso L."/>
            <person name="Cedroni M."/>
            <person name="Cotton M."/>
            <person name="Davidson T."/>
            <person name="Desai A."/>
            <person name="Elliott G."/>
            <person name="Erb T."/>
            <person name="Fronick C."/>
            <person name="Gaige T."/>
            <person name="Haakenson W."/>
            <person name="Haglund K."/>
            <person name="Holmes A."/>
            <person name="Harkins R."/>
            <person name="Kim K."/>
            <person name="Kruchowski S.S."/>
            <person name="Strong C.M."/>
            <person name="Grewal N."/>
            <person name="Goyea E."/>
            <person name="Hou S."/>
            <person name="Levy A."/>
            <person name="Martinka S."/>
            <person name="Mead K."/>
            <person name="McLellan M.D."/>
            <person name="Meyer R."/>
            <person name="Randall-Maher J."/>
            <person name="Tomlinson C."/>
            <person name="Dauphin-Kohlberg S."/>
            <person name="Kozlowicz-Reilly A."/>
            <person name="Shah N."/>
            <person name="Swearengen-Shahid S."/>
            <person name="Snider J."/>
            <person name="Strong J.T."/>
            <person name="Thompson J."/>
            <person name="Yoakum M."/>
            <person name="Leonard S."/>
            <person name="Pearman C."/>
            <person name="Trani L."/>
            <person name="Radionenko M."/>
            <person name="Waligorski J.E."/>
            <person name="Wang C."/>
            <person name="Rock S.M."/>
            <person name="Tin-Wollam A.-M."/>
            <person name="Maupin R."/>
            <person name="Latreille P."/>
            <person name="Wendl M.C."/>
            <person name="Yang S.-P."/>
            <person name="Pohl C."/>
            <person name="Wallis J.W."/>
            <person name="Spieth J."/>
            <person name="Bieri T.A."/>
            <person name="Berkowicz N."/>
            <person name="Nelson J.O."/>
            <person name="Osborne J."/>
            <person name="Ding L."/>
            <person name="Meyer R."/>
            <person name="Sabo A."/>
            <person name="Shotland Y."/>
            <person name="Sinha P."/>
            <person name="Wohldmann P.E."/>
            <person name="Cook L.L."/>
            <person name="Hickenbotham M.T."/>
            <person name="Eldred J."/>
            <person name="Williams D."/>
            <person name="Jones T.A."/>
            <person name="She X."/>
            <person name="Ciccarelli F.D."/>
            <person name="Izaurralde E."/>
            <person name="Taylor J."/>
            <person name="Schmutz J."/>
            <person name="Myers R.M."/>
            <person name="Cox D.R."/>
            <person name="Huang X."/>
            <person name="McPherson J.D."/>
            <person name="Mardis E.R."/>
            <person name="Clifton S.W."/>
            <person name="Warren W.C."/>
            <person name="Chinwalla A.T."/>
            <person name="Eddy S.R."/>
            <person name="Marra M.A."/>
            <person name="Ovcharenko I."/>
            <person name="Furey T.S."/>
            <person name="Miller W."/>
            <person name="Eichler E.E."/>
            <person name="Bork P."/>
            <person name="Suyama M."/>
            <person name="Torrents D."/>
            <person name="Waterston R.H."/>
            <person name="Wilson R.K."/>
        </authorList>
    </citation>
    <scope>NUCLEOTIDE SEQUENCE [LARGE SCALE GENOMIC DNA]</scope>
</reference>
<reference key="2">
    <citation type="submission" date="2005-09" db="EMBL/GenBank/DDBJ databases">
        <authorList>
            <person name="Mural R.J."/>
            <person name="Istrail S."/>
            <person name="Sutton G.G."/>
            <person name="Florea L."/>
            <person name="Halpern A.L."/>
            <person name="Mobarry C.M."/>
            <person name="Lippert R."/>
            <person name="Walenz B."/>
            <person name="Shatkay H."/>
            <person name="Dew I."/>
            <person name="Miller J.R."/>
            <person name="Flanigan M.J."/>
            <person name="Edwards N.J."/>
            <person name="Bolanos R."/>
            <person name="Fasulo D."/>
            <person name="Halldorsson B.V."/>
            <person name="Hannenhalli S."/>
            <person name="Turner R."/>
            <person name="Yooseph S."/>
            <person name="Lu F."/>
            <person name="Nusskern D.R."/>
            <person name="Shue B.C."/>
            <person name="Zheng X.H."/>
            <person name="Zhong F."/>
            <person name="Delcher A.L."/>
            <person name="Huson D.H."/>
            <person name="Kravitz S.A."/>
            <person name="Mouchard L."/>
            <person name="Reinert K."/>
            <person name="Remington K.A."/>
            <person name="Clark A.G."/>
            <person name="Waterman M.S."/>
            <person name="Eichler E.E."/>
            <person name="Adams M.D."/>
            <person name="Hunkapiller M.W."/>
            <person name="Myers E.W."/>
            <person name="Venter J.C."/>
        </authorList>
    </citation>
    <scope>NUCLEOTIDE SEQUENCE [LARGE SCALE GENOMIC DNA]</scope>
</reference>
<reference key="3">
    <citation type="journal article" date="2004" name="Genome Res.">
        <title>The status, quality, and expansion of the NIH full-length cDNA project: the Mammalian Gene Collection (MGC).</title>
        <authorList>
            <consortium name="The MGC Project Team"/>
        </authorList>
    </citation>
    <scope>NUCLEOTIDE SEQUENCE [LARGE SCALE MRNA] (ISOFORMS 1 AND 3)</scope>
    <source>
        <tissue>Brain</tissue>
        <tissue>Lung</tissue>
    </source>
</reference>
<reference key="4">
    <citation type="journal article" date="2007" name="BMC Genomics">
        <title>The full-ORF clone resource of the German cDNA consortium.</title>
        <authorList>
            <person name="Bechtel S."/>
            <person name="Rosenfelder H."/>
            <person name="Duda A."/>
            <person name="Schmidt C.P."/>
            <person name="Ernst U."/>
            <person name="Wellenreuther R."/>
            <person name="Mehrle A."/>
            <person name="Schuster C."/>
            <person name="Bahr A."/>
            <person name="Bloecker H."/>
            <person name="Heubner D."/>
            <person name="Hoerlein A."/>
            <person name="Michel G."/>
            <person name="Wedler H."/>
            <person name="Koehrer K."/>
            <person name="Ottenwaelder B."/>
            <person name="Poustka A."/>
            <person name="Wiemann S."/>
            <person name="Schupp I."/>
        </authorList>
    </citation>
    <scope>NUCLEOTIDE SEQUENCE [LARGE SCALE MRNA] OF 97-1749 (ISOFORM 1)</scope>
    <scope>NUCLEOTIDE SEQUENCE [LARGE SCALE MRNA] OF 1203-1737 (ISOFORM 2)</scope>
    <source>
        <tissue>Testis</tissue>
    </source>
</reference>
<reference key="5">
    <citation type="journal article" date="1999" name="DNA Res.">
        <title>Characterization of cDNA clones selected by the GeneMark analysis from size-fractionated cDNA libraries from human brain.</title>
        <authorList>
            <person name="Hirosawa M."/>
            <person name="Nagase T."/>
            <person name="Ishikawa K."/>
            <person name="Kikuno R."/>
            <person name="Nomura N."/>
            <person name="Ohara O."/>
        </authorList>
    </citation>
    <scope>NUCLEOTIDE SEQUENCE [LARGE SCALE MRNA] OF 660-1749 (ISOFORM 1)</scope>
    <source>
        <tissue>Brain</tissue>
    </source>
</reference>
<reference key="6">
    <citation type="journal article" date="2010" name="J. Biol. Chem.">
        <title>In vivo identification of sumoylation sites by a signature tag and cysteine-targeted affinity purification.</title>
        <authorList>
            <person name="Blomster H.A."/>
            <person name="Imanishi S.Y."/>
            <person name="Siimes J."/>
            <person name="Kastu J."/>
            <person name="Morrice N.A."/>
            <person name="Eriksson J.E."/>
            <person name="Sistonen L."/>
        </authorList>
    </citation>
    <scope>SUMOYLATION AT LYS-4</scope>
    <scope>ACETYLATION AT MET-1</scope>
    <source>
        <tissue>Cervix carcinoma</tissue>
    </source>
</reference>
<reference key="7">
    <citation type="journal article" date="2013" name="Am. J. Hum. Genet.">
        <title>Defects in the IFT-B component IFT172 cause Jeune and Mainzer-Saldino syndromes in humans.</title>
        <authorList>
            <consortium name="UK10K Consortium"/>
            <person name="Halbritter J."/>
            <person name="Bizet A.A."/>
            <person name="Schmidts M."/>
            <person name="Porath J.D."/>
            <person name="Braun D.A."/>
            <person name="Gee H.Y."/>
            <person name="McInerney-Leo A.M."/>
            <person name="Krug P."/>
            <person name="Filhol E."/>
            <person name="Davis E.E."/>
            <person name="Airik R."/>
            <person name="Czarnecki P.G."/>
            <person name="Lehman A.M."/>
            <person name="Trnka P."/>
            <person name="Nitschke P."/>
            <person name="Bole-Feysot C."/>
            <person name="Schueler M."/>
            <person name="Knebelmann B."/>
            <person name="Burtey S."/>
            <person name="Szabo A.J."/>
            <person name="Tory K."/>
            <person name="Leo P.J."/>
            <person name="Gardiner B."/>
            <person name="McKenzie F.A."/>
            <person name="Zankl A."/>
            <person name="Brown M.A."/>
            <person name="Hartley J.L."/>
            <person name="Maher E.R."/>
            <person name="Li C."/>
            <person name="Leroux M.R."/>
            <person name="Scambler P.J."/>
            <person name="Zhan S.H."/>
            <person name="Jones S.J."/>
            <person name="Kayserili H."/>
            <person name="Tuysuz B."/>
            <person name="Moorani K.N."/>
            <person name="Constantinescu A."/>
            <person name="Krantz I.D."/>
            <person name="Kaplan B.S."/>
            <person name="Shah J.V."/>
            <person name="Hurd T.W."/>
            <person name="Doherty D."/>
            <person name="Katsanis N."/>
            <person name="Duncan E.L."/>
            <person name="Otto E.A."/>
            <person name="Beales P.L."/>
            <person name="Mitchison H.M."/>
            <person name="Saunier S."/>
            <person name="Hildebrandt F."/>
        </authorList>
    </citation>
    <scope>SUBCELLULAR LOCATION</scope>
    <scope>VARIANTS SRTD10 TRP-296; ASN-411; 464-ASP-ILE-465 DEL; PRO-1536; CYS-1544 AND ARG-1727</scope>
</reference>
<reference key="8">
    <citation type="journal article" date="2015" name="Hum. Mol. Genet.">
        <title>Mutations in IFT172 cause isolated retinal degeneration and Bardet-Biedl syndrome.</title>
        <authorList>
            <person name="Bujakowska K.M."/>
            <person name="Zhang Q."/>
            <person name="Siemiatkowska A.M."/>
            <person name="Liu Q."/>
            <person name="Place E."/>
            <person name="Falk M.J."/>
            <person name="Consugar M."/>
            <person name="Lancelot M.E."/>
            <person name="Antonio A."/>
            <person name="Lonjou C."/>
            <person name="Carpentier W."/>
            <person name="Mohand-Said S."/>
            <person name="den Hollander A.I."/>
            <person name="Cremers F.P."/>
            <person name="Leroy B.P."/>
            <person name="Gai X."/>
            <person name="Sahel J.A."/>
            <person name="van den Born L.I."/>
            <person name="Collin R.W."/>
            <person name="Zeitz C."/>
            <person name="Audo I."/>
            <person name="Pierce E.A."/>
        </authorList>
    </citation>
    <scope>VARIANTS RP71 PRO-257 AND GLU-1605</scope>
    <scope>VARIANT BBS20 GLN-1567</scope>
    <scope>CHARACTERIZATION OF VARIANTS RP71 PRO-257 AND GLU-1605</scope>
    <scope>CHARACTERIZATION OF VARIANT BBS20 GLN-1567</scope>
    <scope>INVOLVEMENT IN RP71</scope>
    <scope>INVOLVEMENT IN BBS20</scope>
</reference>
<reference key="9">
    <citation type="journal article" date="2020" name="J. Hum. Genet.">
        <title>Bardet-Biedl syndrome and related disorders in Japan.</title>
        <authorList>
            <person name="Hirano M."/>
            <person name="Satake W."/>
            <person name="Moriyama N."/>
            <person name="Saida K."/>
            <person name="Okamoto N."/>
            <person name="Cha P.C."/>
            <person name="Suzuki Y."/>
            <person name="Kusunoki S."/>
            <person name="Toda T."/>
        </authorList>
    </citation>
    <scope>VARIANTS BBS20 ARG-493 AND TYR-719</scope>
</reference>
<feature type="chain" id="PRO_0000328941" description="Intraflagellar transport protein 172 homolog">
    <location>
        <begin position="1"/>
        <end position="1749"/>
    </location>
</feature>
<feature type="repeat" description="WD 1">
    <location>
        <begin position="14"/>
        <end position="53"/>
    </location>
</feature>
<feature type="repeat" description="WD 2">
    <location>
        <begin position="64"/>
        <end position="103"/>
    </location>
</feature>
<feature type="repeat" description="WD 3">
    <location>
        <begin position="110"/>
        <end position="148"/>
    </location>
</feature>
<feature type="repeat" description="WD 4">
    <location>
        <begin position="150"/>
        <end position="191"/>
    </location>
</feature>
<feature type="repeat" description="WD 5">
    <location>
        <begin position="195"/>
        <end position="233"/>
    </location>
</feature>
<feature type="repeat" description="WD 6">
    <location>
        <begin position="238"/>
        <end position="278"/>
    </location>
</feature>
<feature type="repeat" description="WD 7">
    <location>
        <begin position="284"/>
        <end position="323"/>
    </location>
</feature>
<feature type="repeat" description="WD 8">
    <location>
        <begin position="483"/>
        <end position="520"/>
    </location>
</feature>
<feature type="repeat" description="WD 9">
    <location>
        <begin position="521"/>
        <end position="559"/>
    </location>
</feature>
<feature type="repeat" description="TPR 1">
    <location>
        <begin position="593"/>
        <end position="624"/>
    </location>
</feature>
<feature type="repeat" description="TPR 2">
    <location>
        <begin position="692"/>
        <end position="725"/>
    </location>
</feature>
<feature type="repeat" description="TPR 3">
    <location>
        <begin position="809"/>
        <end position="842"/>
    </location>
</feature>
<feature type="repeat" description="TPR 4">
    <location>
        <begin position="854"/>
        <end position="887"/>
    </location>
</feature>
<feature type="repeat" description="TPR 5">
    <location>
        <begin position="912"/>
        <end position="945"/>
    </location>
</feature>
<feature type="repeat" description="TPR 6">
    <location>
        <begin position="947"/>
        <end position="970"/>
    </location>
</feature>
<feature type="repeat" description="TPR 7">
    <location>
        <begin position="971"/>
        <end position="1004"/>
    </location>
</feature>
<feature type="repeat" description="TPR 8">
    <location>
        <begin position="1042"/>
        <end position="1075"/>
    </location>
</feature>
<feature type="repeat" description="TPR 9">
    <location>
        <begin position="1142"/>
        <end position="1175"/>
    </location>
</feature>
<feature type="repeat" description="TPR 10">
    <location>
        <begin position="1276"/>
        <end position="1309"/>
    </location>
</feature>
<feature type="repeat" description="TPR 11">
    <location>
        <begin position="1345"/>
        <end position="1378"/>
    </location>
</feature>
<feature type="repeat" description="TPR 12">
    <location>
        <begin position="1411"/>
        <end position="1445"/>
    </location>
</feature>
<feature type="repeat" description="TPR 13">
    <location>
        <begin position="1447"/>
        <end position="1477"/>
    </location>
</feature>
<feature type="repeat" description="TPR 14">
    <location>
        <begin position="1574"/>
        <end position="1607"/>
    </location>
</feature>
<feature type="modified residue" description="N-acetylmethionine" evidence="3">
    <location>
        <position position="1"/>
    </location>
</feature>
<feature type="modified residue" description="Omega-N-methylarginine" evidence="2">
    <location>
        <position position="672"/>
    </location>
</feature>
<feature type="cross-link" description="Glycyl lysine isopeptide (Lys-Gly) (interchain with G-Cter in SUMO1)">
    <location>
        <position position="4"/>
    </location>
</feature>
<feature type="splice variant" id="VSP_054428" description="In isoform 3." evidence="7">
    <original>LHLYDIESCSKTMILNFCSYMQWV</original>
    <variation>VRRATKALGIGWPTEGVRQAATRD</variation>
    <location>
        <begin position="509"/>
        <end position="532"/>
    </location>
</feature>
<feature type="splice variant" id="VSP_054429" description="In isoform 3." evidence="7">
    <location>
        <begin position="533"/>
        <end position="1749"/>
    </location>
</feature>
<feature type="splice variant" id="VSP_032848" description="In isoform 2." evidence="8">
    <original>CENLVKSSEANS</original>
    <variation>AVLSPSSSVKTW</variation>
    <location>
        <begin position="1514"/>
        <end position="1525"/>
    </location>
</feature>
<feature type="splice variant" id="VSP_032849" description="In isoform 2." evidence="8">
    <location>
        <begin position="1526"/>
        <end position="1749"/>
    </location>
</feature>
<feature type="sequence variant" id="VAR_073800" description="In RP71; represents a null allele; dbSNP:rs786205857." evidence="5">
    <original>L</original>
    <variation>P</variation>
    <location>
        <position position="257"/>
    </location>
</feature>
<feature type="sequence variant" id="VAR_070956" description="In SRTD10; dbSNP:rs145541911." evidence="4">
    <original>R</original>
    <variation>W</variation>
    <location>
        <position position="296"/>
    </location>
</feature>
<feature type="sequence variant" id="VAR_070957" description="In SRTD10; dbSNP:rs587777085." evidence="4">
    <original>I</original>
    <variation>N</variation>
    <location>
        <position position="411"/>
    </location>
</feature>
<feature type="sequence variant" id="VAR_070958" description="In SRTD10." evidence="4">
    <location>
        <begin position="464"/>
        <end position="465"/>
    </location>
</feature>
<feature type="sequence variant" id="VAR_086152" description="In BBS20; uncertain significance; dbSNP:rs1282056614." evidence="6">
    <original>L</original>
    <variation>R</variation>
    <location>
        <position position="493"/>
    </location>
</feature>
<feature type="sequence variant" id="VAR_086153" description="In BBS20; uncertain significance; dbSNP:rs144645349." evidence="6">
    <original>H</original>
    <variation>Y</variation>
    <location>
        <position position="719"/>
    </location>
</feature>
<feature type="sequence variant" id="VAR_042581" description="In dbSNP:rs704793.">
    <original>R</original>
    <variation>H</variation>
    <location>
        <position position="953"/>
    </location>
</feature>
<feature type="sequence variant" id="VAR_070959" description="In SRTD10; dbSNP:rs587777080." evidence="4">
    <original>L</original>
    <variation>P</variation>
    <location>
        <position position="1536"/>
    </location>
</feature>
<feature type="sequence variant" id="VAR_070960" description="In SRTD10; dbSNP:rs587777079." evidence="4">
    <original>R</original>
    <variation>C</variation>
    <location>
        <position position="1544"/>
    </location>
</feature>
<feature type="sequence variant" id="VAR_073801" description="In BBS20; hypomorphic mutation; dbSNP:rs786205855." evidence="5">
    <original>H</original>
    <variation>Q</variation>
    <location>
        <position position="1567"/>
    </location>
</feature>
<feature type="sequence variant" id="VAR_073802" description="In RP71; hypomorphic mutation; dbSNP:rs786205856." evidence="5">
    <original>D</original>
    <variation>E</variation>
    <location>
        <position position="1605"/>
    </location>
</feature>
<feature type="sequence variant" id="VAR_070961" description="In SRTD10; dbSNP:rs149614625." evidence="4">
    <original>C</original>
    <variation>R</variation>
    <location>
        <position position="1727"/>
    </location>
</feature>
<feature type="sequence conflict" description="In Ref. 4; CAB55914." evidence="9" ref="4">
    <original>P</original>
    <variation>L</variation>
    <location>
        <position position="1475"/>
    </location>
</feature>
<feature type="helix" evidence="10">
    <location>
        <begin position="1478"/>
        <end position="1489"/>
    </location>
</feature>
<feature type="strand" evidence="10">
    <location>
        <begin position="1491"/>
        <end position="1493"/>
    </location>
</feature>
<feature type="helix" evidence="10">
    <location>
        <begin position="1497"/>
        <end position="1499"/>
    </location>
</feature>
<feature type="helix" evidence="10">
    <location>
        <begin position="1500"/>
        <end position="1520"/>
    </location>
</feature>
<feature type="helix" evidence="10">
    <location>
        <begin position="1526"/>
        <end position="1548"/>
    </location>
</feature>
<feature type="helix" evidence="10">
    <location>
        <begin position="1551"/>
        <end position="1553"/>
    </location>
</feature>
<feature type="helix" evidence="10">
    <location>
        <begin position="1554"/>
        <end position="1564"/>
    </location>
</feature>
<feature type="helix" evidence="10">
    <location>
        <begin position="1565"/>
        <end position="1567"/>
    </location>
</feature>
<feature type="helix" evidence="10">
    <location>
        <begin position="1573"/>
        <end position="1586"/>
    </location>
</feature>
<feature type="helix" evidence="10">
    <location>
        <begin position="1590"/>
        <end position="1609"/>
    </location>
</feature>
<feature type="helix" evidence="10">
    <location>
        <begin position="1618"/>
        <end position="1620"/>
    </location>
</feature>
<feature type="helix" evidence="10">
    <location>
        <begin position="1639"/>
        <end position="1652"/>
    </location>
</feature>
<feature type="strand" evidence="10">
    <location>
        <begin position="1668"/>
        <end position="1670"/>
    </location>
</feature>
<feature type="turn" evidence="10">
    <location>
        <begin position="1677"/>
        <end position="1679"/>
    </location>
</feature>
<feature type="turn" evidence="10">
    <location>
        <begin position="1687"/>
        <end position="1689"/>
    </location>
</feature>
<feature type="strand" evidence="10">
    <location>
        <begin position="1695"/>
        <end position="1699"/>
    </location>
</feature>
<feature type="strand" evidence="10">
    <location>
        <begin position="1706"/>
        <end position="1708"/>
    </location>
</feature>
<feature type="helix" evidence="10">
    <location>
        <begin position="1709"/>
        <end position="1722"/>
    </location>
</feature>
<feature type="helix" evidence="10">
    <location>
        <begin position="1725"/>
        <end position="1738"/>
    </location>
</feature>
<evidence type="ECO:0000250" key="1"/>
<evidence type="ECO:0000250" key="2">
    <source>
        <dbReference type="UniProtKB" id="Q6VH22"/>
    </source>
</evidence>
<evidence type="ECO:0000269" key="3">
    <source>
    </source>
</evidence>
<evidence type="ECO:0000269" key="4">
    <source>
    </source>
</evidence>
<evidence type="ECO:0000269" key="5">
    <source>
    </source>
</evidence>
<evidence type="ECO:0000269" key="6">
    <source>
    </source>
</evidence>
<evidence type="ECO:0000303" key="7">
    <source>
    </source>
</evidence>
<evidence type="ECO:0000303" key="8">
    <source>
    </source>
</evidence>
<evidence type="ECO:0000305" key="9"/>
<evidence type="ECO:0007829" key="10">
    <source>
        <dbReference type="PDB" id="9H2D"/>
    </source>
</evidence>
<sequence>MHLKHLRTLLSPQDGAAKVTCMAWSQNNAKFAVCTVDRVVLLYDEHGERRDKFSTKPADMKYGRKSYMVKGMAFSPDSTKIAIGQTDNIIYVYKIGEDWGDKKVICNKFIQTSAVTCLQWPAEYIIVFGLAEGKVRLANTKTNKSSTIYGTESYVVSLTTNCSGKGILSGHADGTIVRYFFDDEGSGESQGKLVNHPCPPYALAWATNSIVAAGCDRKIVAYGKEGHMLQTFDYSRDPQEREFTTAVSSPGGQSVVLGSYDRLRVFNWIPRRSIWEEAKPKEITNLYTITALAWKRDGSRLCVGTLCGGVEQFDCCLRRSIYKNKFELTYVGPSQVIVKNLSSGTRVVLKSHYGYEVEEVKILGKERYLVAHTSETLLLGDLNTNRLSEIAWQGSGGNEKYFFENENVCMIFNAGELTLVEYGNNDTLGSVRTEFMNPHLISVRINERCQRGTEDNKKLAYLIDIKTIAIVDLIGGYNIGTVSHESRVDWLELNETGHKLLFRDRKLRLHLYDIESCSKTMILNFCSYMQWVPGSDVLVAQNRNSLCVWYNIEAPERVTMFTIRGDVIGLERGGGKTEVMVMEGVTTVAYTLDEGLIEFGTAIDDGNYIRATAFLETLEMTPETEAMWKTLSKLALEARQLHIAERCFSALGQVAKARFLHETNEIADQVSREYGGEGTDFYQVRARLAMLEKNYKLAEMIFLEQNAVEEAMGMYQELHRWDECIAVAEAKGHPALEKLRRSYYQWLMDTQQEERAGELQESQGDGLAAISLYLKAGLPAKAARLVLTREELLANTELVEHITAALIKGELYERAGDLFEKIHNPQKALECYRKGNAFMKAVELARLAFPVEVVKLEEAWGDHLVQQKQLDAAINHYIEARCSIKAIEAALGARQWKKAIYILDLQDRNTASKYYPLVAQHYASLQEYEIAEELYTKGDRTKDAIDMYTQAGRWEQAHKLAMKCMRPEDVSVLYITQAQEMEKQGKYREAERLYVTVQEPDLAITMYKKHKLYDDMIRLVGKHHPDLLSDTHLHLGKELEAEGRLQEAEYHYLEAQEWKATVNMYRASGLWEEAYRVARTQGGANAHKHVAYLWAKSLGGEAAVRLLNKLGLLEAAVDHAADNCSFEFAFELSRLALKHKTPEVHLKYAMFLEDEGKFEEAEAEFIRAGKPKEAVLMFVHNQDWEAAQRVAEAHDPDSVAEVLVGQARGALEEKDFQKAEGLLLRAQRPGLALNYYKEAGLWSDALRICKDYVPSQLEALQEEYEREATKKGARGVEGFVEQARHWEQAGEYSRAVDCYLKVRDSGNSGLAEKCWMKAAELSIKFLPPQRNMEVVLAVGPQLIGIGKHSAAAELYLNLDLVKEAIDAFIEGEEWNKAKRVAKELDPRYEDYVDQHYKEFLKNQGKVDSLVGVDVIAALDLYVEQGQWDKCIETATKQNYKILHKYVALYATHLIREGSSAQALALYVQHGAPANPQNFNIYKRIFTDMVSSPGTNCAEAYHSWADLRDVLFNLCENLVKSSEANSPAHEEFKTMLLIAHYYATRSAAQSVKQLETVAARLSVSLLRHTQLLPVDKAFYEAGIAAKAVGWDNMAFIFLNRFLDLTDAIEEGTLDGLDHSDFQDTDIPFEVPLPAKQHVPEAEREEVRDWVLTVSMDQRLEQVLPRDERGAYEASLVAASTGVRALPCLITGYPILRNKIEFKRPGKAANKDNWNKFLMAIKTSHSPVCQDVLKFISQWCGGLPSTSFSFQ</sequence>
<gene>
    <name type="primary">IFT172</name>
    <name type="synonym">KIAA1179</name>
</gene>
<keyword id="KW-0002">3D-structure</keyword>
<keyword id="KW-0007">Acetylation</keyword>
<keyword id="KW-0025">Alternative splicing</keyword>
<keyword id="KW-0083">Bardet-Biedl syndrome</keyword>
<keyword id="KW-0966">Cell projection</keyword>
<keyword id="KW-1186">Ciliopathy</keyword>
<keyword id="KW-0969">Cilium</keyword>
<keyword id="KW-0217">Developmental protein</keyword>
<keyword id="KW-0225">Disease variant</keyword>
<keyword id="KW-1017">Isopeptide bond</keyword>
<keyword id="KW-0488">Methylation</keyword>
<keyword id="KW-0550">Obesity</keyword>
<keyword id="KW-1267">Proteomics identification</keyword>
<keyword id="KW-1185">Reference proteome</keyword>
<keyword id="KW-0677">Repeat</keyword>
<keyword id="KW-0682">Retinitis pigmentosa</keyword>
<keyword id="KW-0802">TPR repeat</keyword>
<keyword id="KW-0832">Ubl conjugation</keyword>
<keyword id="KW-0853">WD repeat</keyword>
<dbReference type="EMBL" id="AC074117">
    <property type="status" value="NOT_ANNOTATED_CDS"/>
    <property type="molecule type" value="Genomic_DNA"/>
</dbReference>
<dbReference type="EMBL" id="CH471053">
    <property type="protein sequence ID" value="EAX00573.1"/>
    <property type="molecule type" value="Genomic_DNA"/>
</dbReference>
<dbReference type="EMBL" id="BC008024">
    <property type="protein sequence ID" value="AAH08024.1"/>
    <property type="molecule type" value="mRNA"/>
</dbReference>
<dbReference type="EMBL" id="BC047294">
    <property type="protein sequence ID" value="AAH47294.1"/>
    <property type="molecule type" value="mRNA"/>
</dbReference>
<dbReference type="EMBL" id="BC137126">
    <property type="protein sequence ID" value="AAI37127.1"/>
    <property type="molecule type" value="mRNA"/>
</dbReference>
<dbReference type="EMBL" id="BC142675">
    <property type="protein sequence ID" value="AAI42676.1"/>
    <property type="molecule type" value="mRNA"/>
</dbReference>
<dbReference type="EMBL" id="BC142729">
    <property type="protein sequence ID" value="AAI42730.1"/>
    <property type="molecule type" value="mRNA"/>
</dbReference>
<dbReference type="EMBL" id="AL110218">
    <property type="protein sequence ID" value="CAB53678.1"/>
    <property type="molecule type" value="mRNA"/>
</dbReference>
<dbReference type="EMBL" id="AL117421">
    <property type="protein sequence ID" value="CAB55914.2"/>
    <property type="molecule type" value="mRNA"/>
</dbReference>
<dbReference type="EMBL" id="AB033005">
    <property type="protein sequence ID" value="BAA86493.1"/>
    <property type="molecule type" value="mRNA"/>
</dbReference>
<dbReference type="CCDS" id="CCDS1755.1">
    <molecule id="Q9UG01-1"/>
</dbReference>
<dbReference type="PIR" id="T14758">
    <property type="entry name" value="T14758"/>
</dbReference>
<dbReference type="PIR" id="T17224">
    <property type="entry name" value="T17224"/>
</dbReference>
<dbReference type="RefSeq" id="NP_056477.1">
    <molecule id="Q9UG01-1"/>
    <property type="nucleotide sequence ID" value="NM_015662.3"/>
</dbReference>
<dbReference type="PDB" id="9H2D">
    <property type="method" value="X-ray"/>
    <property type="resolution" value="2.10 A"/>
    <property type="chains" value="A/B=1471-1742"/>
</dbReference>
<dbReference type="PDBsum" id="9H2D"/>
<dbReference type="SMR" id="Q9UG01"/>
<dbReference type="BioGRID" id="117589">
    <property type="interactions" value="53"/>
</dbReference>
<dbReference type="ComplexPortal" id="CPX-5022">
    <property type="entry name" value="Intraflagellar transport complex B"/>
</dbReference>
<dbReference type="CORUM" id="Q9UG01"/>
<dbReference type="FunCoup" id="Q9UG01">
    <property type="interactions" value="488"/>
</dbReference>
<dbReference type="IntAct" id="Q9UG01">
    <property type="interactions" value="46"/>
</dbReference>
<dbReference type="MINT" id="Q9UG01"/>
<dbReference type="STRING" id="9606.ENSP00000260570"/>
<dbReference type="iPTMnet" id="Q9UG01"/>
<dbReference type="PhosphoSitePlus" id="Q9UG01"/>
<dbReference type="BioMuta" id="IFT172"/>
<dbReference type="DMDM" id="182662418"/>
<dbReference type="jPOST" id="Q9UG01"/>
<dbReference type="MassIVE" id="Q9UG01"/>
<dbReference type="PaxDb" id="9606-ENSP00000260570"/>
<dbReference type="PeptideAtlas" id="Q9UG01"/>
<dbReference type="ProteomicsDB" id="726"/>
<dbReference type="ProteomicsDB" id="84196">
    <molecule id="Q9UG01-1"/>
</dbReference>
<dbReference type="ProteomicsDB" id="84197">
    <molecule id="Q9UG01-2"/>
</dbReference>
<dbReference type="Pumba" id="Q9UG01"/>
<dbReference type="Antibodypedia" id="28528">
    <property type="antibodies" value="84 antibodies from 19 providers"/>
</dbReference>
<dbReference type="DNASU" id="26160"/>
<dbReference type="Ensembl" id="ENST00000260570.8">
    <molecule id="Q9UG01-1"/>
    <property type="protein sequence ID" value="ENSP00000260570.3"/>
    <property type="gene ID" value="ENSG00000138002.16"/>
</dbReference>
<dbReference type="Ensembl" id="ENST00000359466.10">
    <molecule id="Q9UG01-3"/>
    <property type="protein sequence ID" value="ENSP00000352443.6"/>
    <property type="gene ID" value="ENSG00000138002.16"/>
</dbReference>
<dbReference type="Ensembl" id="ENST00000674701.1">
    <molecule id="Q9UG01-3"/>
    <property type="protein sequence ID" value="ENSP00000502275.1"/>
    <property type="gene ID" value="ENSG00000138002.16"/>
</dbReference>
<dbReference type="GeneID" id="26160"/>
<dbReference type="KEGG" id="hsa:26160"/>
<dbReference type="MANE-Select" id="ENST00000260570.8">
    <property type="protein sequence ID" value="ENSP00000260570.3"/>
    <property type="RefSeq nucleotide sequence ID" value="NM_015662.3"/>
    <property type="RefSeq protein sequence ID" value="NP_056477.1"/>
</dbReference>
<dbReference type="UCSC" id="uc002rku.4">
    <molecule id="Q9UG01-1"/>
    <property type="organism name" value="human"/>
</dbReference>
<dbReference type="AGR" id="HGNC:30391"/>
<dbReference type="CTD" id="26160"/>
<dbReference type="DisGeNET" id="26160"/>
<dbReference type="GeneCards" id="IFT172"/>
<dbReference type="GeneReviews" id="IFT172"/>
<dbReference type="HGNC" id="HGNC:30391">
    <property type="gene designation" value="IFT172"/>
</dbReference>
<dbReference type="HPA" id="ENSG00000138002">
    <property type="expression patterns" value="Low tissue specificity"/>
</dbReference>
<dbReference type="MalaCards" id="IFT172"/>
<dbReference type="MIM" id="607386">
    <property type="type" value="gene"/>
</dbReference>
<dbReference type="MIM" id="615630">
    <property type="type" value="phenotype"/>
</dbReference>
<dbReference type="MIM" id="616394">
    <property type="type" value="phenotype"/>
</dbReference>
<dbReference type="MIM" id="619471">
    <property type="type" value="phenotype"/>
</dbReference>
<dbReference type="neXtProt" id="NX_Q9UG01"/>
<dbReference type="OpenTargets" id="ENSG00000138002"/>
<dbReference type="Orphanet" id="110">
    <property type="disease" value="Bardet-Biedl syndrome"/>
</dbReference>
<dbReference type="Orphanet" id="474">
    <property type="disease" value="Jeune syndrome"/>
</dbReference>
<dbReference type="Orphanet" id="791">
    <property type="disease" value="Retinitis pigmentosa"/>
</dbReference>
<dbReference type="Orphanet" id="140969">
    <property type="disease" value="Saldino-Mainzer syndrome"/>
</dbReference>
<dbReference type="PharmGKB" id="PA142671666"/>
<dbReference type="VEuPathDB" id="HostDB:ENSG00000138002"/>
<dbReference type="eggNOG" id="KOG3616">
    <property type="taxonomic scope" value="Eukaryota"/>
</dbReference>
<dbReference type="GeneTree" id="ENSGT00940000153417"/>
<dbReference type="HOGENOM" id="CLU_002716_0_0_1"/>
<dbReference type="InParanoid" id="Q9UG01"/>
<dbReference type="OMA" id="LKRTIWQ"/>
<dbReference type="OrthoDB" id="2186662at2759"/>
<dbReference type="PAN-GO" id="Q9UG01">
    <property type="GO annotations" value="4 GO annotations based on evolutionary models"/>
</dbReference>
<dbReference type="PhylomeDB" id="Q9UG01"/>
<dbReference type="TreeFam" id="TF312901"/>
<dbReference type="PathwayCommons" id="Q9UG01"/>
<dbReference type="Reactome" id="R-HSA-5610787">
    <property type="pathway name" value="Hedgehog 'off' state"/>
</dbReference>
<dbReference type="Reactome" id="R-HSA-5620924">
    <property type="pathway name" value="Intraflagellar transport"/>
</dbReference>
<dbReference type="SignaLink" id="Q9UG01"/>
<dbReference type="SIGNOR" id="Q9UG01"/>
<dbReference type="BioGRID-ORCS" id="26160">
    <property type="hits" value="14 hits in 1155 CRISPR screens"/>
</dbReference>
<dbReference type="ChiTaRS" id="IFT172">
    <property type="organism name" value="human"/>
</dbReference>
<dbReference type="GenomeRNAi" id="26160"/>
<dbReference type="Pharos" id="Q9UG01">
    <property type="development level" value="Tbio"/>
</dbReference>
<dbReference type="PRO" id="PR:Q9UG01"/>
<dbReference type="Proteomes" id="UP000005640">
    <property type="component" value="Chromosome 2"/>
</dbReference>
<dbReference type="RNAct" id="Q9UG01">
    <property type="molecule type" value="protein"/>
</dbReference>
<dbReference type="Bgee" id="ENSG00000138002">
    <property type="expression patterns" value="Expressed in right uterine tube and 158 other cell types or tissues"/>
</dbReference>
<dbReference type="ExpressionAtlas" id="Q9UG01">
    <property type="expression patterns" value="baseline and differential"/>
</dbReference>
<dbReference type="GO" id="GO:0005930">
    <property type="term" value="C:axoneme"/>
    <property type="evidence" value="ECO:0000318"/>
    <property type="project" value="GO_Central"/>
</dbReference>
<dbReference type="GO" id="GO:0036064">
    <property type="term" value="C:ciliary basal body"/>
    <property type="evidence" value="ECO:0000318"/>
    <property type="project" value="GO_Central"/>
</dbReference>
<dbReference type="GO" id="GO:0097542">
    <property type="term" value="C:ciliary tip"/>
    <property type="evidence" value="ECO:0000304"/>
    <property type="project" value="Reactome"/>
</dbReference>
<dbReference type="GO" id="GO:0005929">
    <property type="term" value="C:cilium"/>
    <property type="evidence" value="ECO:0000250"/>
    <property type="project" value="UniProtKB"/>
</dbReference>
<dbReference type="GO" id="GO:1903561">
    <property type="term" value="C:extracellular vesicle"/>
    <property type="evidence" value="ECO:0007005"/>
    <property type="project" value="UniProtKB"/>
</dbReference>
<dbReference type="GO" id="GO:0030992">
    <property type="term" value="C:intraciliary transport particle B"/>
    <property type="evidence" value="ECO:0000353"/>
    <property type="project" value="ComplexPortal"/>
</dbReference>
<dbReference type="GO" id="GO:0097598">
    <property type="term" value="C:sperm cytoplasmic droplet"/>
    <property type="evidence" value="ECO:0007669"/>
    <property type="project" value="Ensembl"/>
</dbReference>
<dbReference type="GO" id="GO:0097225">
    <property type="term" value="C:sperm midpiece"/>
    <property type="evidence" value="ECO:0007669"/>
    <property type="project" value="Ensembl"/>
</dbReference>
<dbReference type="GO" id="GO:0097228">
    <property type="term" value="C:sperm principal piece"/>
    <property type="evidence" value="ECO:0007669"/>
    <property type="project" value="Ensembl"/>
</dbReference>
<dbReference type="GO" id="GO:0060348">
    <property type="term" value="P:bone development"/>
    <property type="evidence" value="ECO:0007669"/>
    <property type="project" value="Ensembl"/>
</dbReference>
<dbReference type="GO" id="GO:0007420">
    <property type="term" value="P:brain development"/>
    <property type="evidence" value="ECO:0007669"/>
    <property type="project" value="Ensembl"/>
</dbReference>
<dbReference type="GO" id="GO:0060271">
    <property type="term" value="P:cilium assembly"/>
    <property type="evidence" value="ECO:0000314"/>
    <property type="project" value="UniProtKB"/>
</dbReference>
<dbReference type="GO" id="GO:0031122">
    <property type="term" value="P:cytoplasmic microtubule organization"/>
    <property type="evidence" value="ECO:0007669"/>
    <property type="project" value="Ensembl"/>
</dbReference>
<dbReference type="GO" id="GO:0009953">
    <property type="term" value="P:dorsal/ventral pattern formation"/>
    <property type="evidence" value="ECO:0007669"/>
    <property type="project" value="Ensembl"/>
</dbReference>
<dbReference type="GO" id="GO:0048596">
    <property type="term" value="P:embryonic camera-type eye morphogenesis"/>
    <property type="evidence" value="ECO:0007669"/>
    <property type="project" value="Ensembl"/>
</dbReference>
<dbReference type="GO" id="GO:0008544">
    <property type="term" value="P:epidermis development"/>
    <property type="evidence" value="ECO:0007669"/>
    <property type="project" value="Ensembl"/>
</dbReference>
<dbReference type="GO" id="GO:0001947">
    <property type="term" value="P:heart looping"/>
    <property type="evidence" value="ECO:0007669"/>
    <property type="project" value="Ensembl"/>
</dbReference>
<dbReference type="GO" id="GO:0061525">
    <property type="term" value="P:hindgut development"/>
    <property type="evidence" value="ECO:0007669"/>
    <property type="project" value="Ensembl"/>
</dbReference>
<dbReference type="GO" id="GO:0035720">
    <property type="term" value="P:intraciliary anterograde transport"/>
    <property type="evidence" value="ECO:0000303"/>
    <property type="project" value="ComplexPortal"/>
</dbReference>
<dbReference type="GO" id="GO:0042073">
    <property type="term" value="P:intraciliary transport"/>
    <property type="evidence" value="ECO:0000318"/>
    <property type="project" value="GO_Central"/>
</dbReference>
<dbReference type="GO" id="GO:0043616">
    <property type="term" value="P:keratinocyte proliferation"/>
    <property type="evidence" value="ECO:0007669"/>
    <property type="project" value="Ensembl"/>
</dbReference>
<dbReference type="GO" id="GO:0070986">
    <property type="term" value="P:left/right axis specification"/>
    <property type="evidence" value="ECO:0007669"/>
    <property type="project" value="Ensembl"/>
</dbReference>
<dbReference type="GO" id="GO:0060173">
    <property type="term" value="P:limb development"/>
    <property type="evidence" value="ECO:0007669"/>
    <property type="project" value="Ensembl"/>
</dbReference>
<dbReference type="GO" id="GO:0010839">
    <property type="term" value="P:negative regulation of keratinocyte proliferation"/>
    <property type="evidence" value="ECO:0007669"/>
    <property type="project" value="Ensembl"/>
</dbReference>
<dbReference type="GO" id="GO:0045879">
    <property type="term" value="P:negative regulation of smoothened signaling pathway"/>
    <property type="evidence" value="ECO:0007669"/>
    <property type="project" value="Ensembl"/>
</dbReference>
<dbReference type="GO" id="GO:0001843">
    <property type="term" value="P:neural tube closure"/>
    <property type="evidence" value="ECO:0007669"/>
    <property type="project" value="Ensembl"/>
</dbReference>
<dbReference type="GO" id="GO:1905515">
    <property type="term" value="P:non-motile cilium assembly"/>
    <property type="evidence" value="ECO:0007669"/>
    <property type="project" value="Ensembl"/>
</dbReference>
<dbReference type="GO" id="GO:0007219">
    <property type="term" value="P:Notch signaling pathway"/>
    <property type="evidence" value="ECO:0007669"/>
    <property type="project" value="Ensembl"/>
</dbReference>
<dbReference type="GO" id="GO:0045880">
    <property type="term" value="P:positive regulation of smoothened signaling pathway"/>
    <property type="evidence" value="ECO:0007669"/>
    <property type="project" value="Ensembl"/>
</dbReference>
<dbReference type="GO" id="GO:0016485">
    <property type="term" value="P:protein processing"/>
    <property type="evidence" value="ECO:0007669"/>
    <property type="project" value="Ensembl"/>
</dbReference>
<dbReference type="GO" id="GO:0060021">
    <property type="term" value="P:roof of mouth development"/>
    <property type="evidence" value="ECO:0007669"/>
    <property type="project" value="Ensembl"/>
</dbReference>
<dbReference type="GO" id="GO:0007224">
    <property type="term" value="P:smoothened signaling pathway"/>
    <property type="evidence" value="ECO:0007669"/>
    <property type="project" value="Ensembl"/>
</dbReference>
<dbReference type="GO" id="GO:0021522">
    <property type="term" value="P:spinal cord motor neuron differentiation"/>
    <property type="evidence" value="ECO:0007669"/>
    <property type="project" value="Ensembl"/>
</dbReference>
<dbReference type="FunFam" id="1.25.40.470:FF:000008">
    <property type="entry name" value="Intraflagellar transport protein 172 homolog"/>
    <property type="match status" value="1"/>
</dbReference>
<dbReference type="FunFam" id="1.25.40.470:FF:000012">
    <property type="entry name" value="intraflagellar transport protein 172 homolog"/>
    <property type="match status" value="1"/>
</dbReference>
<dbReference type="FunFam" id="1.25.40.470:FF:000013">
    <property type="entry name" value="intraflagellar transport protein 172 homolog"/>
    <property type="match status" value="1"/>
</dbReference>
<dbReference type="FunFam" id="2.130.10.10:FF:000345">
    <property type="entry name" value="intraflagellar transport protein 172 homolog"/>
    <property type="match status" value="1"/>
</dbReference>
<dbReference type="FunFam" id="2.130.10.10:FF:000387">
    <property type="entry name" value="intraflagellar transport protein 172 homolog"/>
    <property type="match status" value="1"/>
</dbReference>
<dbReference type="Gene3D" id="1.25.40.470">
    <property type="match status" value="3"/>
</dbReference>
<dbReference type="Gene3D" id="2.130.10.10">
    <property type="entry name" value="YVTN repeat-like/Quinoprotein amine dehydrogenase"/>
    <property type="match status" value="2"/>
</dbReference>
<dbReference type="InterPro" id="IPR016024">
    <property type="entry name" value="ARM-type_fold"/>
</dbReference>
<dbReference type="InterPro" id="IPR011990">
    <property type="entry name" value="TPR-like_helical_dom_sf"/>
</dbReference>
<dbReference type="InterPro" id="IPR056168">
    <property type="entry name" value="TPR_IF140/IFT172/WDR19"/>
</dbReference>
<dbReference type="InterPro" id="IPR056157">
    <property type="entry name" value="TPR_IFT80_172_dom"/>
</dbReference>
<dbReference type="InterPro" id="IPR015943">
    <property type="entry name" value="WD40/YVTN_repeat-like_dom_sf"/>
</dbReference>
<dbReference type="InterPro" id="IPR036322">
    <property type="entry name" value="WD40_repeat_dom_sf"/>
</dbReference>
<dbReference type="InterPro" id="IPR001680">
    <property type="entry name" value="WD40_rpt"/>
</dbReference>
<dbReference type="PANTHER" id="PTHR15722">
    <property type="entry name" value="IFT140/172-RELATED"/>
    <property type="match status" value="1"/>
</dbReference>
<dbReference type="PANTHER" id="PTHR15722:SF2">
    <property type="entry name" value="INTRAFLAGELLAR TRANSPORT PROTEIN 172 HOMOLOG"/>
    <property type="match status" value="1"/>
</dbReference>
<dbReference type="Pfam" id="PF24762">
    <property type="entry name" value="TPR_IF140-IFT172"/>
    <property type="match status" value="1"/>
</dbReference>
<dbReference type="Pfam" id="PF23387">
    <property type="entry name" value="TPR_IFT80_172"/>
    <property type="match status" value="1"/>
</dbReference>
<dbReference type="Pfam" id="PF00400">
    <property type="entry name" value="WD40"/>
    <property type="match status" value="1"/>
</dbReference>
<dbReference type="SMART" id="SM00320">
    <property type="entry name" value="WD40"/>
    <property type="match status" value="7"/>
</dbReference>
<dbReference type="SUPFAM" id="SSF48371">
    <property type="entry name" value="ARM repeat"/>
    <property type="match status" value="1"/>
</dbReference>
<dbReference type="SUPFAM" id="SSF48452">
    <property type="entry name" value="TPR-like"/>
    <property type="match status" value="1"/>
</dbReference>
<dbReference type="SUPFAM" id="SSF69322">
    <property type="entry name" value="Tricorn protease domain 2"/>
    <property type="match status" value="1"/>
</dbReference>
<dbReference type="SUPFAM" id="SSF50978">
    <property type="entry name" value="WD40 repeat-like"/>
    <property type="match status" value="1"/>
</dbReference>
<comment type="function">
    <text evidence="1">Required for the maintenance and formation of cilia. Plays an indirect role in hedgehog (Hh) signaling, cilia being required for all activity of the hedgehog pathway (By similarity).</text>
</comment>
<comment type="subunit">
    <text evidence="2">Interacts with IFT88 (By similarity). Interacts with IFT57 (By similarity). Interacts with RABL2/RABL2A; binds preferentially to GDP-bound RABL2 (By similarity).</text>
</comment>
<comment type="subcellular location">
    <subcellularLocation>
        <location evidence="4">Cell projection</location>
        <location evidence="4">Cilium</location>
    </subcellularLocation>
    <text>Localized to the axoneme and around the base of the cilium.</text>
</comment>
<comment type="alternative products">
    <event type="alternative splicing"/>
    <isoform>
        <id>Q9UG01-1</id>
        <name>1</name>
        <sequence type="displayed"/>
    </isoform>
    <isoform>
        <id>Q9UG01-2</id>
        <name>2</name>
        <sequence type="described" ref="VSP_032848 VSP_032849"/>
    </isoform>
    <isoform>
        <id>Q9UG01-3</id>
        <name>3</name>
        <sequence type="described" ref="VSP_054428 VSP_054429"/>
    </isoform>
</comment>
<comment type="disease" evidence="4">
    <disease id="DI-04035">
        <name>Short-rib thoracic dysplasia 10 with or without polydactyly</name>
        <acronym>SRTD10</acronym>
        <description>A form of short-rib thoracic dysplasia, a group of autosomal recessive ciliopathies that are characterized by a constricted thoracic cage, short ribs, shortened tubular bones, and a 'trident' appearance of the acetabular roof. Polydactyly is variably present. Non-skeletal involvement can include cleft lip/palate as well as anomalies of major organs such as the brain, eye, heart, kidneys, liver, pancreas, intestines, and genitalia. Some forms of the disease are lethal in the neonatal period due to respiratory insufficiency secondary to a severely restricted thoracic cage, whereas others are compatible with life. Disease spectrum encompasses Ellis-van Creveld syndrome, asphyxiating thoracic dystrophy (Jeune syndrome), Mainzer-Saldino syndrome, and short rib-polydactyly syndrome.</description>
        <dbReference type="MIM" id="615630"/>
    </disease>
    <text>The disease is caused by variants affecting the gene represented in this entry.</text>
</comment>
<comment type="disease" evidence="5">
    <disease id="DI-04435">
        <name>Retinitis pigmentosa 71</name>
        <acronym>RP71</acronym>
        <description>A retinal dystrophy belonging to the group of pigmentary retinopathies. Retinitis pigmentosa is characterized by retinal pigment deposits visible on fundus examination and primary loss of rod photoreceptor cells followed by secondary loss of cone photoreceptors. Patients typically have night vision blindness and loss of midperipheral visual field. As their condition progresses, they lose their far peripheral visual field and eventually central vision as well.</description>
        <dbReference type="MIM" id="616394"/>
    </disease>
    <text>The disease is caused by variants affecting the gene represented in this entry.</text>
</comment>
<comment type="disease" evidence="5 6">
    <disease id="DI-06190">
        <name>Bardet-Biedl syndrome 20</name>
        <acronym>BBS20</acronym>
        <description>A form of Bardet-Biedl syndrome, a syndrome characterized by usually severe pigmentary retinopathy, early-onset obesity, polydactyly, hypogenitalism, renal malformation and intellectual disability. Secondary features include diabetes mellitus, hypertension and congenital heart disease. Bardet-Biedl syndrome inheritance is autosomal recessive, but three mutated alleles (two at one locus, and a third at a second locus) may be required for clinical manifestation of some forms of the disease.</description>
        <dbReference type="MIM" id="619471"/>
    </disease>
    <text>The disease is caused by variants affecting the gene represented in this entry.</text>
</comment>
<comment type="similarity">
    <text evidence="9">Belongs to the IFT172 family.</text>
</comment>
<accession>Q9UG01</accession>
<accession>A5PKZ0</accession>
<accession>B2RNU5</accession>
<accession>Q86X44</accession>
<accession>Q96HW4</accession>
<accession>Q9UFJ9</accession>
<accession>Q9ULP1</accession>
<protein>
    <recommendedName>
        <fullName>Intraflagellar transport protein 172 homolog</fullName>
    </recommendedName>
</protein>